<sequence>MRVLGIETSCDETGIAVYDDKAGLLANQLYSQVKLHADYGGVVPELASRDHVRKTVPLIQAALKEANLSAKDIDAVAYTAGPGLVGALLVGATIGRALAFAWGVPAVPVHHMEGHLLAPMLEENAPEFPFVALLVSGGHTQLISVTGIGEYLLLGESVDDAAGEAFDKTAKLLGLDYPGGPMLSRMAQQGTVGRFTFPRPMTDRPGLDFSFSGLKTFAANTIRANGDDDQTRADIARAFEDAVVDTLAIKSKRALDQTGFKRLVIAGGVSANQTLRLKLADMMQKRGGEVFYARPEFCTDNGAMIAYAGMVRLRSNLNSELSVSVRPRWPLSELPKV</sequence>
<comment type="function">
    <text evidence="1">Required for the formation of a threonylcarbamoyl group on adenosine at position 37 (t(6)A37) in tRNAs that read codons beginning with adenine. Is involved in the transfer of the threonylcarbamoyl moiety of threonylcarbamoyl-AMP (TC-AMP) to the N6 group of A37, together with TsaE and TsaB. TsaD likely plays a direct catalytic role in this reaction.</text>
</comment>
<comment type="catalytic activity">
    <reaction evidence="1">
        <text>L-threonylcarbamoyladenylate + adenosine(37) in tRNA = N(6)-L-threonylcarbamoyladenosine(37) in tRNA + AMP + H(+)</text>
        <dbReference type="Rhea" id="RHEA:37059"/>
        <dbReference type="Rhea" id="RHEA-COMP:10162"/>
        <dbReference type="Rhea" id="RHEA-COMP:10163"/>
        <dbReference type="ChEBI" id="CHEBI:15378"/>
        <dbReference type="ChEBI" id="CHEBI:73682"/>
        <dbReference type="ChEBI" id="CHEBI:74411"/>
        <dbReference type="ChEBI" id="CHEBI:74418"/>
        <dbReference type="ChEBI" id="CHEBI:456215"/>
        <dbReference type="EC" id="2.3.1.234"/>
    </reaction>
</comment>
<comment type="cofactor">
    <cofactor evidence="1">
        <name>Fe(2+)</name>
        <dbReference type="ChEBI" id="CHEBI:29033"/>
    </cofactor>
    <text evidence="1">Binds 1 Fe(2+) ion per subunit.</text>
</comment>
<comment type="subcellular location">
    <subcellularLocation>
        <location evidence="1">Cytoplasm</location>
    </subcellularLocation>
</comment>
<comment type="similarity">
    <text evidence="1">Belongs to the KAE1 / TsaD family.</text>
</comment>
<comment type="sequence caution" evidence="2">
    <conflict type="erroneous initiation">
        <sequence resource="EMBL-CDS" id="AAM87082"/>
    </conflict>
</comment>
<proteinExistence type="inferred from homology"/>
<evidence type="ECO:0000255" key="1">
    <source>
        <dbReference type="HAMAP-Rule" id="MF_01445"/>
    </source>
</evidence>
<evidence type="ECO:0000305" key="2"/>
<gene>
    <name evidence="1" type="primary">tsaD</name>
    <name type="synonym">gcp</name>
    <name type="ordered locus">YPO0646</name>
    <name type="ordered locus">y3534</name>
    <name type="ordered locus">YP_2961</name>
</gene>
<feature type="chain" id="PRO_0000303624" description="tRNA N6-adenosine threonylcarbamoyltransferase">
    <location>
        <begin position="1"/>
        <end position="337"/>
    </location>
</feature>
<feature type="binding site" evidence="1">
    <location>
        <position position="111"/>
    </location>
    <ligand>
        <name>Fe cation</name>
        <dbReference type="ChEBI" id="CHEBI:24875"/>
    </ligand>
</feature>
<feature type="binding site" evidence="1">
    <location>
        <position position="115"/>
    </location>
    <ligand>
        <name>Fe cation</name>
        <dbReference type="ChEBI" id="CHEBI:24875"/>
    </ligand>
</feature>
<feature type="binding site" evidence="1">
    <location>
        <begin position="134"/>
        <end position="138"/>
    </location>
    <ligand>
        <name>substrate</name>
    </ligand>
</feature>
<feature type="binding site" evidence="1">
    <location>
        <position position="167"/>
    </location>
    <ligand>
        <name>substrate</name>
    </ligand>
</feature>
<feature type="binding site" evidence="1">
    <location>
        <position position="180"/>
    </location>
    <ligand>
        <name>substrate</name>
    </ligand>
</feature>
<feature type="binding site" evidence="1">
    <location>
        <position position="272"/>
    </location>
    <ligand>
        <name>substrate</name>
    </ligand>
</feature>
<feature type="binding site" evidence="1">
    <location>
        <position position="300"/>
    </location>
    <ligand>
        <name>Fe cation</name>
        <dbReference type="ChEBI" id="CHEBI:24875"/>
    </ligand>
</feature>
<reference key="1">
    <citation type="journal article" date="2001" name="Nature">
        <title>Genome sequence of Yersinia pestis, the causative agent of plague.</title>
        <authorList>
            <person name="Parkhill J."/>
            <person name="Wren B.W."/>
            <person name="Thomson N.R."/>
            <person name="Titball R.W."/>
            <person name="Holden M.T.G."/>
            <person name="Prentice M.B."/>
            <person name="Sebaihia M."/>
            <person name="James K.D."/>
            <person name="Churcher C.M."/>
            <person name="Mungall K.L."/>
            <person name="Baker S."/>
            <person name="Basham D."/>
            <person name="Bentley S.D."/>
            <person name="Brooks K."/>
            <person name="Cerdeno-Tarraga A.-M."/>
            <person name="Chillingworth T."/>
            <person name="Cronin A."/>
            <person name="Davies R.M."/>
            <person name="Davis P."/>
            <person name="Dougan G."/>
            <person name="Feltwell T."/>
            <person name="Hamlin N."/>
            <person name="Holroyd S."/>
            <person name="Jagels K."/>
            <person name="Karlyshev A.V."/>
            <person name="Leather S."/>
            <person name="Moule S."/>
            <person name="Oyston P.C.F."/>
            <person name="Quail M.A."/>
            <person name="Rutherford K.M."/>
            <person name="Simmonds M."/>
            <person name="Skelton J."/>
            <person name="Stevens K."/>
            <person name="Whitehead S."/>
            <person name="Barrell B.G."/>
        </authorList>
    </citation>
    <scope>NUCLEOTIDE SEQUENCE [LARGE SCALE GENOMIC DNA]</scope>
    <source>
        <strain>CO-92 / Biovar Orientalis</strain>
    </source>
</reference>
<reference key="2">
    <citation type="journal article" date="2002" name="J. Bacteriol.">
        <title>Genome sequence of Yersinia pestis KIM.</title>
        <authorList>
            <person name="Deng W."/>
            <person name="Burland V."/>
            <person name="Plunkett G. III"/>
            <person name="Boutin A."/>
            <person name="Mayhew G.F."/>
            <person name="Liss P."/>
            <person name="Perna N.T."/>
            <person name="Rose D.J."/>
            <person name="Mau B."/>
            <person name="Zhou S."/>
            <person name="Schwartz D.C."/>
            <person name="Fetherston J.D."/>
            <person name="Lindler L.E."/>
            <person name="Brubaker R.R."/>
            <person name="Plano G.V."/>
            <person name="Straley S.C."/>
            <person name="McDonough K.A."/>
            <person name="Nilles M.L."/>
            <person name="Matson J.S."/>
            <person name="Blattner F.R."/>
            <person name="Perry R.D."/>
        </authorList>
    </citation>
    <scope>NUCLEOTIDE SEQUENCE [LARGE SCALE GENOMIC DNA]</scope>
    <source>
        <strain>KIM10+ / Biovar Mediaevalis</strain>
    </source>
</reference>
<reference key="3">
    <citation type="journal article" date="2004" name="DNA Res.">
        <title>Complete genome sequence of Yersinia pestis strain 91001, an isolate avirulent to humans.</title>
        <authorList>
            <person name="Song Y."/>
            <person name="Tong Z."/>
            <person name="Wang J."/>
            <person name="Wang L."/>
            <person name="Guo Z."/>
            <person name="Han Y."/>
            <person name="Zhang J."/>
            <person name="Pei D."/>
            <person name="Zhou D."/>
            <person name="Qin H."/>
            <person name="Pang X."/>
            <person name="Han Y."/>
            <person name="Zhai J."/>
            <person name="Li M."/>
            <person name="Cui B."/>
            <person name="Qi Z."/>
            <person name="Jin L."/>
            <person name="Dai R."/>
            <person name="Chen F."/>
            <person name="Li S."/>
            <person name="Ye C."/>
            <person name="Du Z."/>
            <person name="Lin W."/>
            <person name="Wang J."/>
            <person name="Yu J."/>
            <person name="Yang H."/>
            <person name="Wang J."/>
            <person name="Huang P."/>
            <person name="Yang R."/>
        </authorList>
    </citation>
    <scope>NUCLEOTIDE SEQUENCE [LARGE SCALE GENOMIC DNA]</scope>
    <source>
        <strain>91001 / Biovar Mediaevalis</strain>
    </source>
</reference>
<name>TSAD_YERPE</name>
<keyword id="KW-0012">Acyltransferase</keyword>
<keyword id="KW-0963">Cytoplasm</keyword>
<keyword id="KW-0408">Iron</keyword>
<keyword id="KW-0479">Metal-binding</keyword>
<keyword id="KW-1185">Reference proteome</keyword>
<keyword id="KW-0808">Transferase</keyword>
<keyword id="KW-0819">tRNA processing</keyword>
<organism>
    <name type="scientific">Yersinia pestis</name>
    <dbReference type="NCBI Taxonomy" id="632"/>
    <lineage>
        <taxon>Bacteria</taxon>
        <taxon>Pseudomonadati</taxon>
        <taxon>Pseudomonadota</taxon>
        <taxon>Gammaproteobacteria</taxon>
        <taxon>Enterobacterales</taxon>
        <taxon>Yersiniaceae</taxon>
        <taxon>Yersinia</taxon>
    </lineage>
</organism>
<protein>
    <recommendedName>
        <fullName evidence="1">tRNA N6-adenosine threonylcarbamoyltransferase</fullName>
        <ecNumber evidence="1">2.3.1.234</ecNumber>
    </recommendedName>
    <alternativeName>
        <fullName evidence="1">N6-L-threonylcarbamoyladenine synthase</fullName>
        <shortName evidence="1">t(6)A synthase</shortName>
    </alternativeName>
    <alternativeName>
        <fullName evidence="1">t(6)A37 threonylcarbamoyladenosine biosynthesis protein TsaD</fullName>
    </alternativeName>
    <alternativeName>
        <fullName evidence="1">tRNA threonylcarbamoyladenosine biosynthesis protein TsaD</fullName>
    </alternativeName>
</protein>
<accession>Q74RQ9</accession>
<accession>Q8CZR6</accession>
<dbReference type="EC" id="2.3.1.234" evidence="1"/>
<dbReference type="EMBL" id="AL590842">
    <property type="protein sequence ID" value="CAL19323.1"/>
    <property type="molecule type" value="Genomic_DNA"/>
</dbReference>
<dbReference type="EMBL" id="AE009952">
    <property type="protein sequence ID" value="AAM87082.1"/>
    <property type="status" value="ALT_INIT"/>
    <property type="molecule type" value="Genomic_DNA"/>
</dbReference>
<dbReference type="EMBL" id="AE017042">
    <property type="protein sequence ID" value="AAS63140.1"/>
    <property type="molecule type" value="Genomic_DNA"/>
</dbReference>
<dbReference type="PIR" id="AI0079">
    <property type="entry name" value="AI0079"/>
</dbReference>
<dbReference type="RefSeq" id="WP_002212201.1">
    <property type="nucleotide sequence ID" value="NZ_WUCM01000022.1"/>
</dbReference>
<dbReference type="RefSeq" id="YP_002345714.1">
    <property type="nucleotide sequence ID" value="NC_003143.1"/>
</dbReference>
<dbReference type="SMR" id="Q74RQ9"/>
<dbReference type="STRING" id="214092.YPO0646"/>
<dbReference type="PaxDb" id="214092-YPO0646"/>
<dbReference type="EnsemblBacteria" id="AAS63140">
    <property type="protein sequence ID" value="AAS63140"/>
    <property type="gene ID" value="YP_2961"/>
</dbReference>
<dbReference type="GeneID" id="57973978"/>
<dbReference type="KEGG" id="ype:YPO0646"/>
<dbReference type="KEGG" id="ypk:y3534"/>
<dbReference type="KEGG" id="ypm:YP_2961"/>
<dbReference type="PATRIC" id="fig|214092.21.peg.904"/>
<dbReference type="eggNOG" id="COG0533">
    <property type="taxonomic scope" value="Bacteria"/>
</dbReference>
<dbReference type="HOGENOM" id="CLU_023208_0_0_6"/>
<dbReference type="OMA" id="NAAMIGC"/>
<dbReference type="OrthoDB" id="9806197at2"/>
<dbReference type="Proteomes" id="UP000000815">
    <property type="component" value="Chromosome"/>
</dbReference>
<dbReference type="Proteomes" id="UP000001019">
    <property type="component" value="Chromosome"/>
</dbReference>
<dbReference type="Proteomes" id="UP000002490">
    <property type="component" value="Chromosome"/>
</dbReference>
<dbReference type="GO" id="GO:0005737">
    <property type="term" value="C:cytoplasm"/>
    <property type="evidence" value="ECO:0007669"/>
    <property type="project" value="UniProtKB-SubCell"/>
</dbReference>
<dbReference type="GO" id="GO:0005506">
    <property type="term" value="F:iron ion binding"/>
    <property type="evidence" value="ECO:0007669"/>
    <property type="project" value="UniProtKB-UniRule"/>
</dbReference>
<dbReference type="GO" id="GO:0061711">
    <property type="term" value="F:N(6)-L-threonylcarbamoyladenine synthase activity"/>
    <property type="evidence" value="ECO:0007669"/>
    <property type="project" value="UniProtKB-EC"/>
</dbReference>
<dbReference type="GO" id="GO:0002949">
    <property type="term" value="P:tRNA threonylcarbamoyladenosine modification"/>
    <property type="evidence" value="ECO:0007669"/>
    <property type="project" value="UniProtKB-UniRule"/>
</dbReference>
<dbReference type="CDD" id="cd24133">
    <property type="entry name" value="ASKHA_NBD_TsaD_bac"/>
    <property type="match status" value="1"/>
</dbReference>
<dbReference type="FunFam" id="3.30.420.40:FF:000031">
    <property type="entry name" value="tRNA N6-adenosine threonylcarbamoyltransferase"/>
    <property type="match status" value="1"/>
</dbReference>
<dbReference type="Gene3D" id="3.30.420.40">
    <property type="match status" value="2"/>
</dbReference>
<dbReference type="HAMAP" id="MF_01445">
    <property type="entry name" value="TsaD"/>
    <property type="match status" value="1"/>
</dbReference>
<dbReference type="InterPro" id="IPR043129">
    <property type="entry name" value="ATPase_NBD"/>
</dbReference>
<dbReference type="InterPro" id="IPR000905">
    <property type="entry name" value="Gcp-like_dom"/>
</dbReference>
<dbReference type="InterPro" id="IPR017861">
    <property type="entry name" value="KAE1/TsaD"/>
</dbReference>
<dbReference type="InterPro" id="IPR017860">
    <property type="entry name" value="Peptidase_M22_CS"/>
</dbReference>
<dbReference type="InterPro" id="IPR022450">
    <property type="entry name" value="TsaD"/>
</dbReference>
<dbReference type="NCBIfam" id="TIGR00329">
    <property type="entry name" value="gcp_kae1"/>
    <property type="match status" value="1"/>
</dbReference>
<dbReference type="NCBIfam" id="TIGR03723">
    <property type="entry name" value="T6A_TsaD_YgjD"/>
    <property type="match status" value="1"/>
</dbReference>
<dbReference type="PANTHER" id="PTHR11735">
    <property type="entry name" value="TRNA N6-ADENOSINE THREONYLCARBAMOYLTRANSFERASE"/>
    <property type="match status" value="1"/>
</dbReference>
<dbReference type="PANTHER" id="PTHR11735:SF6">
    <property type="entry name" value="TRNA N6-ADENOSINE THREONYLCARBAMOYLTRANSFERASE, MITOCHONDRIAL"/>
    <property type="match status" value="1"/>
</dbReference>
<dbReference type="Pfam" id="PF00814">
    <property type="entry name" value="TsaD"/>
    <property type="match status" value="1"/>
</dbReference>
<dbReference type="PRINTS" id="PR00789">
    <property type="entry name" value="OSIALOPTASE"/>
</dbReference>
<dbReference type="SUPFAM" id="SSF53067">
    <property type="entry name" value="Actin-like ATPase domain"/>
    <property type="match status" value="1"/>
</dbReference>
<dbReference type="PROSITE" id="PS01016">
    <property type="entry name" value="GLYCOPROTEASE"/>
    <property type="match status" value="1"/>
</dbReference>